<protein>
    <recommendedName>
        <fullName>Leucine-rich repeat and immunoglobulin-like domain-containing nogo receptor-interacting protein 1-B</fullName>
    </recommendedName>
</protein>
<proteinExistence type="evidence at protein level"/>
<feature type="signal peptide" evidence="2">
    <location>
        <begin position="1"/>
        <end position="43"/>
    </location>
</feature>
<feature type="chain" id="PRO_0000328648" description="Leucine-rich repeat and immunoglobulin-like domain-containing nogo receptor-interacting protein 1-B">
    <location>
        <begin position="44"/>
        <end position="622"/>
    </location>
</feature>
<feature type="topological domain" description="Extracellular" evidence="2">
    <location>
        <begin position="44"/>
        <end position="563"/>
    </location>
</feature>
<feature type="transmembrane region" description="Helical" evidence="2">
    <location>
        <begin position="564"/>
        <end position="584"/>
    </location>
</feature>
<feature type="topological domain" description="Cytoplasmic" evidence="2">
    <location>
        <begin position="585"/>
        <end position="622"/>
    </location>
</feature>
<feature type="domain" description="LRRNT">
    <location>
        <begin position="44"/>
        <end position="73"/>
    </location>
</feature>
<feature type="repeat" description="LRR 1">
    <location>
        <begin position="74"/>
        <end position="95"/>
    </location>
</feature>
<feature type="repeat" description="LRR 2">
    <location>
        <begin position="98"/>
        <end position="119"/>
    </location>
</feature>
<feature type="repeat" description="LRR 3">
    <location>
        <begin position="122"/>
        <end position="143"/>
    </location>
</feature>
<feature type="repeat" description="LRR 4">
    <location>
        <begin position="146"/>
        <end position="167"/>
    </location>
</feature>
<feature type="repeat" description="LRR 5">
    <location>
        <begin position="170"/>
        <end position="191"/>
    </location>
</feature>
<feature type="repeat" description="LRR 6">
    <location>
        <begin position="194"/>
        <end position="215"/>
    </location>
</feature>
<feature type="repeat" description="LRR 7">
    <location>
        <begin position="218"/>
        <end position="239"/>
    </location>
</feature>
<feature type="repeat" description="LRR 8">
    <location>
        <begin position="266"/>
        <end position="287"/>
    </location>
</feature>
<feature type="repeat" description="LRR 9">
    <location>
        <begin position="290"/>
        <end position="311"/>
    </location>
</feature>
<feature type="repeat" description="LRR 10">
    <location>
        <begin position="314"/>
        <end position="335"/>
    </location>
</feature>
<feature type="repeat" description="LRR 11">
    <location>
        <begin position="338"/>
        <end position="359"/>
    </location>
</feature>
<feature type="domain" description="LRRCT">
    <location>
        <begin position="371"/>
        <end position="425"/>
    </location>
</feature>
<feature type="domain" description="Ig-like C2-type">
    <location>
        <begin position="413"/>
        <end position="515"/>
    </location>
</feature>
<feature type="glycosylation site" description="N-linked (GlcNAc...) asparagine" evidence="2">
    <location>
        <position position="146"/>
    </location>
</feature>
<feature type="glycosylation site" description="N-linked (GlcNAc...) asparagine" evidence="2">
    <location>
        <position position="204"/>
    </location>
</feature>
<feature type="glycosylation site" description="N-linked (GlcNAc...) asparagine" evidence="2">
    <location>
        <position position="266"/>
    </location>
</feature>
<feature type="glycosylation site" description="N-linked (GlcNAc...) asparagine" evidence="2">
    <location>
        <position position="276"/>
    </location>
</feature>
<feature type="glycosylation site" description="N-linked (GlcNAc...) asparagine" evidence="2">
    <location>
        <position position="295"/>
    </location>
</feature>
<feature type="glycosylation site" description="N-linked (GlcNAc...) asparagine" evidence="2">
    <location>
        <position position="343"/>
    </location>
</feature>
<feature type="glycosylation site" description="N-linked (GlcNAc...) asparagine" evidence="2">
    <location>
        <position position="494"/>
    </location>
</feature>
<feature type="glycosylation site" description="N-linked (GlcNAc...) asparagine" evidence="2">
    <location>
        <position position="507"/>
    </location>
</feature>
<feature type="glycosylation site" description="N-linked (GlcNAc...) asparagine" evidence="2">
    <location>
        <position position="528"/>
    </location>
</feature>
<feature type="glycosylation site" description="N-linked (GlcNAc...) asparagine" evidence="2">
    <location>
        <position position="544"/>
    </location>
</feature>
<feature type="disulfide bond" evidence="3">
    <location>
        <begin position="44"/>
        <end position="50"/>
    </location>
</feature>
<feature type="disulfide bond" evidence="3">
    <location>
        <begin position="48"/>
        <end position="59"/>
    </location>
</feature>
<feature type="disulfide bond" evidence="3">
    <location>
        <begin position="375"/>
        <end position="398"/>
    </location>
</feature>
<feature type="disulfide bond" evidence="3">
    <location>
        <begin position="377"/>
        <end position="423"/>
    </location>
</feature>
<feature type="disulfide bond" evidence="3">
    <location>
        <begin position="448"/>
        <end position="499"/>
    </location>
</feature>
<organism>
    <name type="scientific">Danio rerio</name>
    <name type="common">Zebrafish</name>
    <name type="synonym">Brachydanio rerio</name>
    <dbReference type="NCBI Taxonomy" id="7955"/>
    <lineage>
        <taxon>Eukaryota</taxon>
        <taxon>Metazoa</taxon>
        <taxon>Chordata</taxon>
        <taxon>Craniata</taxon>
        <taxon>Vertebrata</taxon>
        <taxon>Euteleostomi</taxon>
        <taxon>Actinopterygii</taxon>
        <taxon>Neopterygii</taxon>
        <taxon>Teleostei</taxon>
        <taxon>Ostariophysi</taxon>
        <taxon>Cypriniformes</taxon>
        <taxon>Danionidae</taxon>
        <taxon>Danioninae</taxon>
        <taxon>Danio</taxon>
    </lineage>
</organism>
<gene>
    <name type="primary">lingo1b</name>
    <name type="synonym">lingo1</name>
    <name type="ORF">si:ch211-116a8.1</name>
    <name type="ORF">zgc:92338</name>
</gene>
<evidence type="ECO:0000250" key="1"/>
<evidence type="ECO:0000255" key="2"/>
<evidence type="ECO:0000255" key="3">
    <source>
        <dbReference type="PROSITE-ProRule" id="PRU00114"/>
    </source>
</evidence>
<comment type="function">
    <text evidence="1">May play a role in regulating axonal regeneration and plasticity in the adult central nervous system.</text>
</comment>
<comment type="interaction">
    <interactant intactId="EBI-2263743">
        <id>Q66HV9</id>
    </interactant>
    <interactant intactId="EBI-1579483">
        <id>Q6NW92</id>
        <label>igfbp7</label>
    </interactant>
    <organismsDiffer>false</organismsDiffer>
    <experiments>2</experiments>
</comment>
<comment type="subcellular location">
    <subcellularLocation>
        <location evidence="1">Cell membrane</location>
        <topology evidence="1">Single-pass type I membrane protein</topology>
    </subcellularLocation>
</comment>
<accession>Q66HV9</accession>
<accession>A8BAU5</accession>
<name>LIG1B_DANRE</name>
<keyword id="KW-1003">Cell membrane</keyword>
<keyword id="KW-1015">Disulfide bond</keyword>
<keyword id="KW-0325">Glycoprotein</keyword>
<keyword id="KW-0393">Immunoglobulin domain</keyword>
<keyword id="KW-0433">Leucine-rich repeat</keyword>
<keyword id="KW-0472">Membrane</keyword>
<keyword id="KW-1185">Reference proteome</keyword>
<keyword id="KW-0677">Repeat</keyword>
<keyword id="KW-0732">Signal</keyword>
<keyword id="KW-0812">Transmembrane</keyword>
<keyword id="KW-1133">Transmembrane helix</keyword>
<dbReference type="EMBL" id="CU468744">
    <property type="protein sequence ID" value="CAP07968.1"/>
    <property type="molecule type" value="mRNA"/>
</dbReference>
<dbReference type="EMBL" id="BX470207">
    <property type="protein sequence ID" value="CAM13144.1"/>
    <property type="molecule type" value="Genomic_DNA"/>
</dbReference>
<dbReference type="EMBL" id="BC081651">
    <property type="protein sequence ID" value="AAH81651.1"/>
    <property type="molecule type" value="mRNA"/>
</dbReference>
<dbReference type="RefSeq" id="NP_001004576.1">
    <property type="nucleotide sequence ID" value="NM_001004576.1"/>
</dbReference>
<dbReference type="SMR" id="Q66HV9"/>
<dbReference type="FunCoup" id="Q66HV9">
    <property type="interactions" value="2"/>
</dbReference>
<dbReference type="IntAct" id="Q66HV9">
    <property type="interactions" value="1"/>
</dbReference>
<dbReference type="STRING" id="7955.ENSDARP00000052112"/>
<dbReference type="GlyCosmos" id="Q66HV9">
    <property type="glycosylation" value="10 sites, No reported glycans"/>
</dbReference>
<dbReference type="PaxDb" id="7955-ENSDARP00000052112"/>
<dbReference type="Ensembl" id="ENSDART00000052113">
    <property type="protein sequence ID" value="ENSDARP00000052112"/>
    <property type="gene ID" value="ENSDARG00000035899"/>
</dbReference>
<dbReference type="GeneID" id="447837"/>
<dbReference type="KEGG" id="dre:447837"/>
<dbReference type="AGR" id="ZFIN:ZDB-GENE-040912-136"/>
<dbReference type="CTD" id="447837"/>
<dbReference type="ZFIN" id="ZDB-GENE-040912-136">
    <property type="gene designation" value="lingo1b"/>
</dbReference>
<dbReference type="eggNOG" id="KOG0619">
    <property type="taxonomic scope" value="Eukaryota"/>
</dbReference>
<dbReference type="HOGENOM" id="CLU_000288_18_24_1"/>
<dbReference type="InParanoid" id="Q66HV9"/>
<dbReference type="OMA" id="IMWQSPR"/>
<dbReference type="OrthoDB" id="10061535at2759"/>
<dbReference type="PhylomeDB" id="Q66HV9"/>
<dbReference type="TreeFam" id="TF334360"/>
<dbReference type="Reactome" id="R-DRE-193634">
    <property type="pathway name" value="Axonal growth inhibition (RHOA activation)"/>
</dbReference>
<dbReference type="PRO" id="PR:Q66HV9"/>
<dbReference type="Proteomes" id="UP000000437">
    <property type="component" value="Chromosome 7"/>
</dbReference>
<dbReference type="Bgee" id="ENSDARG00000035899">
    <property type="expression patterns" value="Expressed in anterior presumptive neural plate and 23 other cell types or tissues"/>
</dbReference>
<dbReference type="GO" id="GO:0031012">
    <property type="term" value="C:extracellular matrix"/>
    <property type="evidence" value="ECO:0000318"/>
    <property type="project" value="GO_Central"/>
</dbReference>
<dbReference type="GO" id="GO:0005615">
    <property type="term" value="C:extracellular space"/>
    <property type="evidence" value="ECO:0000318"/>
    <property type="project" value="GO_Central"/>
</dbReference>
<dbReference type="GO" id="GO:0005886">
    <property type="term" value="C:plasma membrane"/>
    <property type="evidence" value="ECO:0007669"/>
    <property type="project" value="UniProtKB-SubCell"/>
</dbReference>
<dbReference type="GO" id="GO:0005154">
    <property type="term" value="F:epidermal growth factor receptor binding"/>
    <property type="evidence" value="ECO:0000318"/>
    <property type="project" value="GO_Central"/>
</dbReference>
<dbReference type="GO" id="GO:0042552">
    <property type="term" value="P:myelination"/>
    <property type="evidence" value="ECO:0000315"/>
    <property type="project" value="ZFIN"/>
</dbReference>
<dbReference type="GO" id="GO:0048666">
    <property type="term" value="P:neuron development"/>
    <property type="evidence" value="ECO:0000315"/>
    <property type="project" value="ZFIN"/>
</dbReference>
<dbReference type="FunFam" id="2.60.40.10:FF:000076">
    <property type="entry name" value="Leucine-rich repeat and Ig domain-containing 4"/>
    <property type="match status" value="1"/>
</dbReference>
<dbReference type="FunFam" id="3.80.10.10:FF:000014">
    <property type="entry name" value="Leucine-rich repeat and immunoglobulin-like domain-containing nogo receptor-interacting protein 1"/>
    <property type="match status" value="1"/>
</dbReference>
<dbReference type="Gene3D" id="2.60.40.10">
    <property type="entry name" value="Immunoglobulins"/>
    <property type="match status" value="1"/>
</dbReference>
<dbReference type="Gene3D" id="3.80.10.10">
    <property type="entry name" value="Ribonuclease Inhibitor"/>
    <property type="match status" value="1"/>
</dbReference>
<dbReference type="InterPro" id="IPR007110">
    <property type="entry name" value="Ig-like_dom"/>
</dbReference>
<dbReference type="InterPro" id="IPR036179">
    <property type="entry name" value="Ig-like_dom_sf"/>
</dbReference>
<dbReference type="InterPro" id="IPR013783">
    <property type="entry name" value="Ig-like_fold"/>
</dbReference>
<dbReference type="InterPro" id="IPR013098">
    <property type="entry name" value="Ig_I-set"/>
</dbReference>
<dbReference type="InterPro" id="IPR003599">
    <property type="entry name" value="Ig_sub"/>
</dbReference>
<dbReference type="InterPro" id="IPR003598">
    <property type="entry name" value="Ig_sub2"/>
</dbReference>
<dbReference type="InterPro" id="IPR001611">
    <property type="entry name" value="Leu-rich_rpt"/>
</dbReference>
<dbReference type="InterPro" id="IPR003591">
    <property type="entry name" value="Leu-rich_rpt_typical-subtyp"/>
</dbReference>
<dbReference type="InterPro" id="IPR026906">
    <property type="entry name" value="LRR_5"/>
</dbReference>
<dbReference type="InterPro" id="IPR032675">
    <property type="entry name" value="LRR_dom_sf"/>
</dbReference>
<dbReference type="InterPro" id="IPR050541">
    <property type="entry name" value="LRR_TM_domain-containing"/>
</dbReference>
<dbReference type="InterPro" id="IPR000372">
    <property type="entry name" value="LRRNT"/>
</dbReference>
<dbReference type="PANTHER" id="PTHR24369">
    <property type="entry name" value="ANTIGEN BSP, PUTATIVE-RELATED"/>
    <property type="match status" value="1"/>
</dbReference>
<dbReference type="PANTHER" id="PTHR24369:SF178">
    <property type="entry name" value="LEUCINE-RICH REPEAT AND IMMUNOGLOBULIN-LIKE DOMAIN-CONTAINING NOGO RECEPTOR-INTERACTING PROTEIN 1"/>
    <property type="match status" value="1"/>
</dbReference>
<dbReference type="Pfam" id="PF07679">
    <property type="entry name" value="I-set"/>
    <property type="match status" value="1"/>
</dbReference>
<dbReference type="Pfam" id="PF13306">
    <property type="entry name" value="LRR_5"/>
    <property type="match status" value="1"/>
</dbReference>
<dbReference type="Pfam" id="PF13855">
    <property type="entry name" value="LRR_8"/>
    <property type="match status" value="2"/>
</dbReference>
<dbReference type="SMART" id="SM00409">
    <property type="entry name" value="IG"/>
    <property type="match status" value="1"/>
</dbReference>
<dbReference type="SMART" id="SM00408">
    <property type="entry name" value="IGc2"/>
    <property type="match status" value="1"/>
</dbReference>
<dbReference type="SMART" id="SM00369">
    <property type="entry name" value="LRR_TYP"/>
    <property type="match status" value="7"/>
</dbReference>
<dbReference type="SMART" id="SM00013">
    <property type="entry name" value="LRRNT"/>
    <property type="match status" value="1"/>
</dbReference>
<dbReference type="SUPFAM" id="SSF48726">
    <property type="entry name" value="Immunoglobulin"/>
    <property type="match status" value="1"/>
</dbReference>
<dbReference type="SUPFAM" id="SSF52058">
    <property type="entry name" value="L domain-like"/>
    <property type="match status" value="1"/>
</dbReference>
<dbReference type="PROSITE" id="PS50835">
    <property type="entry name" value="IG_LIKE"/>
    <property type="match status" value="1"/>
</dbReference>
<reference key="1">
    <citation type="journal article" date="2008" name="Genome Res.">
        <title>Large-scale screening for novel low-affinity extracellular protein interactions.</title>
        <authorList>
            <person name="Bushell K.M."/>
            <person name="Soellner C."/>
            <person name="Schuster-Boeckler B."/>
            <person name="Bateman A."/>
            <person name="Wright G.J."/>
        </authorList>
    </citation>
    <scope>NUCLEOTIDE SEQUENCE [LARGE SCALE MRNA]</scope>
</reference>
<reference key="2">
    <citation type="journal article" date="2013" name="Nature">
        <title>The zebrafish reference genome sequence and its relationship to the human genome.</title>
        <authorList>
            <person name="Howe K."/>
            <person name="Clark M.D."/>
            <person name="Torroja C.F."/>
            <person name="Torrance J."/>
            <person name="Berthelot C."/>
            <person name="Muffato M."/>
            <person name="Collins J.E."/>
            <person name="Humphray S."/>
            <person name="McLaren K."/>
            <person name="Matthews L."/>
            <person name="McLaren S."/>
            <person name="Sealy I."/>
            <person name="Caccamo M."/>
            <person name="Churcher C."/>
            <person name="Scott C."/>
            <person name="Barrett J.C."/>
            <person name="Koch R."/>
            <person name="Rauch G.J."/>
            <person name="White S."/>
            <person name="Chow W."/>
            <person name="Kilian B."/>
            <person name="Quintais L.T."/>
            <person name="Guerra-Assuncao J.A."/>
            <person name="Zhou Y."/>
            <person name="Gu Y."/>
            <person name="Yen J."/>
            <person name="Vogel J.H."/>
            <person name="Eyre T."/>
            <person name="Redmond S."/>
            <person name="Banerjee R."/>
            <person name="Chi J."/>
            <person name="Fu B."/>
            <person name="Langley E."/>
            <person name="Maguire S.F."/>
            <person name="Laird G.K."/>
            <person name="Lloyd D."/>
            <person name="Kenyon E."/>
            <person name="Donaldson S."/>
            <person name="Sehra H."/>
            <person name="Almeida-King J."/>
            <person name="Loveland J."/>
            <person name="Trevanion S."/>
            <person name="Jones M."/>
            <person name="Quail M."/>
            <person name="Willey D."/>
            <person name="Hunt A."/>
            <person name="Burton J."/>
            <person name="Sims S."/>
            <person name="McLay K."/>
            <person name="Plumb B."/>
            <person name="Davis J."/>
            <person name="Clee C."/>
            <person name="Oliver K."/>
            <person name="Clark R."/>
            <person name="Riddle C."/>
            <person name="Elliot D."/>
            <person name="Threadgold G."/>
            <person name="Harden G."/>
            <person name="Ware D."/>
            <person name="Begum S."/>
            <person name="Mortimore B."/>
            <person name="Kerry G."/>
            <person name="Heath P."/>
            <person name="Phillimore B."/>
            <person name="Tracey A."/>
            <person name="Corby N."/>
            <person name="Dunn M."/>
            <person name="Johnson C."/>
            <person name="Wood J."/>
            <person name="Clark S."/>
            <person name="Pelan S."/>
            <person name="Griffiths G."/>
            <person name="Smith M."/>
            <person name="Glithero R."/>
            <person name="Howden P."/>
            <person name="Barker N."/>
            <person name="Lloyd C."/>
            <person name="Stevens C."/>
            <person name="Harley J."/>
            <person name="Holt K."/>
            <person name="Panagiotidis G."/>
            <person name="Lovell J."/>
            <person name="Beasley H."/>
            <person name="Henderson C."/>
            <person name="Gordon D."/>
            <person name="Auger K."/>
            <person name="Wright D."/>
            <person name="Collins J."/>
            <person name="Raisen C."/>
            <person name="Dyer L."/>
            <person name="Leung K."/>
            <person name="Robertson L."/>
            <person name="Ambridge K."/>
            <person name="Leongamornlert D."/>
            <person name="McGuire S."/>
            <person name="Gilderthorp R."/>
            <person name="Griffiths C."/>
            <person name="Manthravadi D."/>
            <person name="Nichol S."/>
            <person name="Barker G."/>
            <person name="Whitehead S."/>
            <person name="Kay M."/>
            <person name="Brown J."/>
            <person name="Murnane C."/>
            <person name="Gray E."/>
            <person name="Humphries M."/>
            <person name="Sycamore N."/>
            <person name="Barker D."/>
            <person name="Saunders D."/>
            <person name="Wallis J."/>
            <person name="Babbage A."/>
            <person name="Hammond S."/>
            <person name="Mashreghi-Mohammadi M."/>
            <person name="Barr L."/>
            <person name="Martin S."/>
            <person name="Wray P."/>
            <person name="Ellington A."/>
            <person name="Matthews N."/>
            <person name="Ellwood M."/>
            <person name="Woodmansey R."/>
            <person name="Clark G."/>
            <person name="Cooper J."/>
            <person name="Tromans A."/>
            <person name="Grafham D."/>
            <person name="Skuce C."/>
            <person name="Pandian R."/>
            <person name="Andrews R."/>
            <person name="Harrison E."/>
            <person name="Kimberley A."/>
            <person name="Garnett J."/>
            <person name="Fosker N."/>
            <person name="Hall R."/>
            <person name="Garner P."/>
            <person name="Kelly D."/>
            <person name="Bird C."/>
            <person name="Palmer S."/>
            <person name="Gehring I."/>
            <person name="Berger A."/>
            <person name="Dooley C.M."/>
            <person name="Ersan-Urun Z."/>
            <person name="Eser C."/>
            <person name="Geiger H."/>
            <person name="Geisler M."/>
            <person name="Karotki L."/>
            <person name="Kirn A."/>
            <person name="Konantz J."/>
            <person name="Konantz M."/>
            <person name="Oberlander M."/>
            <person name="Rudolph-Geiger S."/>
            <person name="Teucke M."/>
            <person name="Lanz C."/>
            <person name="Raddatz G."/>
            <person name="Osoegawa K."/>
            <person name="Zhu B."/>
            <person name="Rapp A."/>
            <person name="Widaa S."/>
            <person name="Langford C."/>
            <person name="Yang F."/>
            <person name="Schuster S.C."/>
            <person name="Carter N.P."/>
            <person name="Harrow J."/>
            <person name="Ning Z."/>
            <person name="Herrero J."/>
            <person name="Searle S.M."/>
            <person name="Enright A."/>
            <person name="Geisler R."/>
            <person name="Plasterk R.H."/>
            <person name="Lee C."/>
            <person name="Westerfield M."/>
            <person name="de Jong P.J."/>
            <person name="Zon L.I."/>
            <person name="Postlethwait J.H."/>
            <person name="Nusslein-Volhard C."/>
            <person name="Hubbard T.J."/>
            <person name="Roest Crollius H."/>
            <person name="Rogers J."/>
            <person name="Stemple D.L."/>
        </authorList>
    </citation>
    <scope>NUCLEOTIDE SEQUENCE [LARGE SCALE GENOMIC DNA]</scope>
    <source>
        <strain>Tuebingen</strain>
    </source>
</reference>
<reference key="3">
    <citation type="submission" date="2004-09" db="EMBL/GenBank/DDBJ databases">
        <authorList>
            <consortium name="NIH - Zebrafish Gene Collection (ZGC) project"/>
        </authorList>
    </citation>
    <scope>NUCLEOTIDE SEQUENCE [LARGE SCALE MRNA]</scope>
</reference>
<sequence>MTFLQVTIKMVAREASGHSYLVACWQPILILMLGTVLSGSATGCPSRCECSAQERSVVCHRRKLITLPEGIPIDTRLLDLSKNRLKAINPEEFLNYPQLEDLQLNENIISVIEPGAFSNLLGLRTLGLRNNNLKLIQLGVFTGLSNLTRLDISENKIVILLDYMFQELYNLKELEVGDNDLVFISHRAFHGLSSLEQLTMERCNLTSVPTEAFSHLHNLLTLKLRHLNVNVIRDFSFRRLYRLKILEIANWPLLESLTAKSLHGLNITTLSITNCNLTAVPYVAIQHLVYLRFFNLSFNPIEVVEGNKMHNLLRLQAFHLVGGRLVSIEPYSFKGLNYLRVLNVSSNSLSTLEESAFHSVGNLETLALHDNPLACDCRLLWVFRRRWRLNFNRQQPSCETPEFLQGKEFKDFPDVLPPNYFTCQKSKIRDHKAIHRFVDEGTTVQFPCQADGDPTPMIMWQSPKKQFITTKSIGRLSVSLDGTLEVRYAQIQDNGTYTCFAVNAGGNDTRLAHLHVHSYSPNWPHQPNKTFAFILNQPSDNSANGTGAMDPFPFDMKTLIIATTMGFISFLGVVLFCLVLLFLWSRGKGNAKPNIEIEYVPRKVDGENSPNEGSHKISMKMI</sequence>